<reference key="1">
    <citation type="submission" date="2004-12" db="EMBL/GenBank/DDBJ databases">
        <title>The genome sequence of Borrelia hermsii and Borrelia turicatae: comparative analysis of two agents of endemic N. America relapsing fever.</title>
        <authorList>
            <person name="Porcella S.F."/>
            <person name="Raffel S.J."/>
            <person name="Schrumpf M.E."/>
            <person name="Montgomery B."/>
            <person name="Smith T."/>
            <person name="Schwan T.G."/>
        </authorList>
    </citation>
    <scope>NUCLEOTIDE SEQUENCE [LARGE SCALE GENOMIC DNA]</scope>
    <source>
        <strain>91E135</strain>
    </source>
</reference>
<feature type="chain" id="PRO_1000193472" description="Peptide chain release factor 1">
    <location>
        <begin position="1"/>
        <end position="357"/>
    </location>
</feature>
<feature type="region of interest" description="Disordered" evidence="2">
    <location>
        <begin position="284"/>
        <end position="313"/>
    </location>
</feature>
<feature type="compositionally biased region" description="Basic and acidic residues" evidence="2">
    <location>
        <begin position="284"/>
        <end position="307"/>
    </location>
</feature>
<feature type="modified residue" description="N5-methylglutamine" evidence="1">
    <location>
        <position position="234"/>
    </location>
</feature>
<protein>
    <recommendedName>
        <fullName evidence="1">Peptide chain release factor 1</fullName>
        <shortName evidence="1">RF-1</shortName>
    </recommendedName>
</protein>
<dbReference type="EMBL" id="CP000049">
    <property type="protein sequence ID" value="AAX17532.1"/>
    <property type="molecule type" value="Genomic_DNA"/>
</dbReference>
<dbReference type="RefSeq" id="WP_011772151.1">
    <property type="nucleotide sequence ID" value="NC_008710.1"/>
</dbReference>
<dbReference type="SMR" id="A1QYZ0"/>
<dbReference type="KEGG" id="btu:BT0196"/>
<dbReference type="eggNOG" id="COG0216">
    <property type="taxonomic scope" value="Bacteria"/>
</dbReference>
<dbReference type="HOGENOM" id="CLU_036856_0_1_12"/>
<dbReference type="Proteomes" id="UP000001205">
    <property type="component" value="Chromosome"/>
</dbReference>
<dbReference type="GO" id="GO:0005737">
    <property type="term" value="C:cytoplasm"/>
    <property type="evidence" value="ECO:0007669"/>
    <property type="project" value="UniProtKB-SubCell"/>
</dbReference>
<dbReference type="GO" id="GO:0016149">
    <property type="term" value="F:translation release factor activity, codon specific"/>
    <property type="evidence" value="ECO:0007669"/>
    <property type="project" value="UniProtKB-UniRule"/>
</dbReference>
<dbReference type="FunFam" id="3.30.160.20:FF:000004">
    <property type="entry name" value="Peptide chain release factor 1"/>
    <property type="match status" value="1"/>
</dbReference>
<dbReference type="FunFam" id="3.30.70.1660:FF:000002">
    <property type="entry name" value="Peptide chain release factor 1"/>
    <property type="match status" value="1"/>
</dbReference>
<dbReference type="FunFam" id="3.30.70.1660:FF:000004">
    <property type="entry name" value="Peptide chain release factor 1"/>
    <property type="match status" value="1"/>
</dbReference>
<dbReference type="Gene3D" id="3.30.160.20">
    <property type="match status" value="1"/>
</dbReference>
<dbReference type="Gene3D" id="3.30.70.1660">
    <property type="match status" value="2"/>
</dbReference>
<dbReference type="Gene3D" id="6.10.140.1950">
    <property type="match status" value="1"/>
</dbReference>
<dbReference type="HAMAP" id="MF_00093">
    <property type="entry name" value="Rel_fac_1"/>
    <property type="match status" value="1"/>
</dbReference>
<dbReference type="InterPro" id="IPR005139">
    <property type="entry name" value="PCRF"/>
</dbReference>
<dbReference type="InterPro" id="IPR000352">
    <property type="entry name" value="Pep_chain_release_fac_I"/>
</dbReference>
<dbReference type="InterPro" id="IPR045853">
    <property type="entry name" value="Pep_chain_release_fac_I_sf"/>
</dbReference>
<dbReference type="InterPro" id="IPR050057">
    <property type="entry name" value="Prokaryotic/Mito_RF"/>
</dbReference>
<dbReference type="InterPro" id="IPR004373">
    <property type="entry name" value="RF-1"/>
</dbReference>
<dbReference type="NCBIfam" id="TIGR00019">
    <property type="entry name" value="prfA"/>
    <property type="match status" value="1"/>
</dbReference>
<dbReference type="NCBIfam" id="NF001859">
    <property type="entry name" value="PRK00591.1"/>
    <property type="match status" value="1"/>
</dbReference>
<dbReference type="PANTHER" id="PTHR43804">
    <property type="entry name" value="LD18447P"/>
    <property type="match status" value="1"/>
</dbReference>
<dbReference type="PANTHER" id="PTHR43804:SF7">
    <property type="entry name" value="LD18447P"/>
    <property type="match status" value="1"/>
</dbReference>
<dbReference type="Pfam" id="PF03462">
    <property type="entry name" value="PCRF"/>
    <property type="match status" value="1"/>
</dbReference>
<dbReference type="Pfam" id="PF00472">
    <property type="entry name" value="RF-1"/>
    <property type="match status" value="1"/>
</dbReference>
<dbReference type="SMART" id="SM00937">
    <property type="entry name" value="PCRF"/>
    <property type="match status" value="1"/>
</dbReference>
<dbReference type="SUPFAM" id="SSF75620">
    <property type="entry name" value="Release factor"/>
    <property type="match status" value="1"/>
</dbReference>
<dbReference type="PROSITE" id="PS00745">
    <property type="entry name" value="RF_PROK_I"/>
    <property type="match status" value="1"/>
</dbReference>
<proteinExistence type="inferred from homology"/>
<gene>
    <name evidence="1" type="primary">prfA</name>
    <name type="ordered locus">BT0196</name>
</gene>
<accession>A1QYZ0</accession>
<evidence type="ECO:0000255" key="1">
    <source>
        <dbReference type="HAMAP-Rule" id="MF_00093"/>
    </source>
</evidence>
<evidence type="ECO:0000256" key="2">
    <source>
        <dbReference type="SAM" id="MobiDB-lite"/>
    </source>
</evidence>
<keyword id="KW-0963">Cytoplasm</keyword>
<keyword id="KW-0488">Methylation</keyword>
<keyword id="KW-0648">Protein biosynthesis</keyword>
<keyword id="KW-1185">Reference proteome</keyword>
<comment type="function">
    <text evidence="1">Peptide chain release factor 1 directs the termination of translation in response to the peptide chain termination codons UAG and UAA.</text>
</comment>
<comment type="subcellular location">
    <subcellularLocation>
        <location evidence="1">Cytoplasm</location>
    </subcellularLocation>
</comment>
<comment type="PTM">
    <text evidence="1">Methylated by PrmC. Methylation increases the termination efficiency of RF1.</text>
</comment>
<comment type="similarity">
    <text evidence="1">Belongs to the prokaryotic/mitochondrial release factor family.</text>
</comment>
<sequence length="357" mass="41671">MFLERLSPIESKIKILEEKLQDTNLIKNQKEYAKVIKEYNYLEKIKEKKDEYENIISQIDENQKILSEEENLEMKELIKQELTHLNLKKDEIEHTIKILLLHQDENDNKNIIIEIRAGTGGEEAALFAHNLYEMYTKYSEKKKWKTELINFNETELGGFKEVSFEIKGKEVFKKLKHESGVHRVQRVPITESNGRLQTSAATVAVLPEVEETDIEINEKDLRIDVYRSSGAGGQHVNTTDSAVRITHLPTGIVVQCQNERSQHKNKDQAMKILRARLYKFEDLKKQEQRSNDRKQQVGSGDRSERIRTYNFPQNRVTEHRANISLYKLEEIMQGELDLLLDTLALKLQEQALKDNPI</sequence>
<name>RF1_BORT9</name>
<organism>
    <name type="scientific">Borrelia turicatae (strain 91E135)</name>
    <dbReference type="NCBI Taxonomy" id="314724"/>
    <lineage>
        <taxon>Bacteria</taxon>
        <taxon>Pseudomonadati</taxon>
        <taxon>Spirochaetota</taxon>
        <taxon>Spirochaetia</taxon>
        <taxon>Spirochaetales</taxon>
        <taxon>Borreliaceae</taxon>
        <taxon>Borrelia</taxon>
    </lineage>
</organism>